<name>RL40_METAR</name>
<keyword id="KW-1185">Reference proteome</keyword>
<keyword id="KW-0687">Ribonucleoprotein</keyword>
<keyword id="KW-0689">Ribosomal protein</keyword>
<accession>Q0W4J1</accession>
<protein>
    <recommendedName>
        <fullName evidence="1">Large ribosomal subunit protein eL40</fullName>
    </recommendedName>
    <alternativeName>
        <fullName evidence="2">50S ribosomal protein L40e</fullName>
    </alternativeName>
</protein>
<dbReference type="EMBL" id="AM114193">
    <property type="protein sequence ID" value="CAJ36702.1"/>
    <property type="molecule type" value="Genomic_DNA"/>
</dbReference>
<dbReference type="RefSeq" id="WP_012035849.1">
    <property type="nucleotide sequence ID" value="NC_009464.1"/>
</dbReference>
<dbReference type="SMR" id="Q0W4J1"/>
<dbReference type="STRING" id="351160.RCIX1433"/>
<dbReference type="GeneID" id="5143943"/>
<dbReference type="KEGG" id="rci:RCIX1433"/>
<dbReference type="PATRIC" id="fig|351160.9.peg.1566"/>
<dbReference type="eggNOG" id="arCOG04049">
    <property type="taxonomic scope" value="Archaea"/>
</dbReference>
<dbReference type="OrthoDB" id="45138at2157"/>
<dbReference type="Proteomes" id="UP000000663">
    <property type="component" value="Chromosome"/>
</dbReference>
<dbReference type="GO" id="GO:1990904">
    <property type="term" value="C:ribonucleoprotein complex"/>
    <property type="evidence" value="ECO:0007669"/>
    <property type="project" value="UniProtKB-KW"/>
</dbReference>
<dbReference type="GO" id="GO:0005840">
    <property type="term" value="C:ribosome"/>
    <property type="evidence" value="ECO:0007669"/>
    <property type="project" value="UniProtKB-KW"/>
</dbReference>
<dbReference type="GO" id="GO:0003735">
    <property type="term" value="F:structural constituent of ribosome"/>
    <property type="evidence" value="ECO:0007669"/>
    <property type="project" value="InterPro"/>
</dbReference>
<dbReference type="GO" id="GO:0006412">
    <property type="term" value="P:translation"/>
    <property type="evidence" value="ECO:0007669"/>
    <property type="project" value="UniProtKB-UniRule"/>
</dbReference>
<dbReference type="Gene3D" id="4.10.1060.50">
    <property type="match status" value="1"/>
</dbReference>
<dbReference type="HAMAP" id="MF_00788">
    <property type="entry name" value="Ribosomal_eL40"/>
    <property type="match status" value="1"/>
</dbReference>
<dbReference type="InterPro" id="IPR023657">
    <property type="entry name" value="Ribosomal_eL40_arc"/>
</dbReference>
<dbReference type="InterPro" id="IPR001975">
    <property type="entry name" value="Ribosomal_eL40_dom"/>
</dbReference>
<dbReference type="InterPro" id="IPR038587">
    <property type="entry name" value="Ribosomal_eL40_sf"/>
</dbReference>
<dbReference type="InterPro" id="IPR011332">
    <property type="entry name" value="Ribosomal_zn-bd"/>
</dbReference>
<dbReference type="NCBIfam" id="NF003161">
    <property type="entry name" value="PRK04136.1"/>
    <property type="match status" value="1"/>
</dbReference>
<dbReference type="PANTHER" id="PTHR39649">
    <property type="entry name" value="50S RIBOSOMAL PROTEIN L40E"/>
    <property type="match status" value="1"/>
</dbReference>
<dbReference type="PANTHER" id="PTHR39649:SF1">
    <property type="entry name" value="LARGE RIBOSOMAL SUBUNIT PROTEIN EL40"/>
    <property type="match status" value="1"/>
</dbReference>
<dbReference type="Pfam" id="PF01020">
    <property type="entry name" value="Ribosomal_L40e"/>
    <property type="match status" value="1"/>
</dbReference>
<dbReference type="SMART" id="SM01377">
    <property type="entry name" value="Ribosomal_L40e"/>
    <property type="match status" value="1"/>
</dbReference>
<dbReference type="SUPFAM" id="SSF57829">
    <property type="entry name" value="Zn-binding ribosomal proteins"/>
    <property type="match status" value="1"/>
</dbReference>
<organism>
    <name type="scientific">Methanocella arvoryzae (strain DSM 22066 / NBRC 105507 / MRE50)</name>
    <dbReference type="NCBI Taxonomy" id="351160"/>
    <lineage>
        <taxon>Archaea</taxon>
        <taxon>Methanobacteriati</taxon>
        <taxon>Methanobacteriota</taxon>
        <taxon>Stenosarchaea group</taxon>
        <taxon>Methanomicrobia</taxon>
        <taxon>Methanocellales</taxon>
        <taxon>Methanocellaceae</taxon>
        <taxon>Methanocella</taxon>
    </lineage>
</organism>
<proteinExistence type="inferred from homology"/>
<gene>
    <name evidence="1" type="primary">rpl40e</name>
    <name type="ordered locus">UNCMA_15230</name>
    <name type="ORF">RCIX1433</name>
</gene>
<evidence type="ECO:0000255" key="1">
    <source>
        <dbReference type="HAMAP-Rule" id="MF_00788"/>
    </source>
</evidence>
<evidence type="ECO:0000305" key="2"/>
<feature type="chain" id="PRO_1000046896" description="Large ribosomal subunit protein eL40">
    <location>
        <begin position="1"/>
        <end position="48"/>
    </location>
</feature>
<reference key="1">
    <citation type="journal article" date="2006" name="Science">
        <title>Genome of rice cluster I archaea -- the key methane producers in the rice rhizosphere.</title>
        <authorList>
            <person name="Erkel C."/>
            <person name="Kube M."/>
            <person name="Reinhardt R."/>
            <person name="Liesack W."/>
        </authorList>
    </citation>
    <scope>NUCLEOTIDE SEQUENCE [LARGE SCALE GENOMIC DNA]</scope>
    <source>
        <strain>DSM 22066 / NBRC 105507 / MRE50</strain>
    </source>
</reference>
<comment type="similarity">
    <text evidence="1">Belongs to the eukaryotic ribosomal protein eL40 family.</text>
</comment>
<sequence length="48" mass="5622">MARFPEAEARTLNLQICRKCNARNALRATRCRKCGYEGLRPKKKELKK</sequence>